<dbReference type="EC" id="7.1.1.-"/>
<dbReference type="EMBL" id="AE000516">
    <property type="protein sequence ID" value="AAK47578.1"/>
    <property type="status" value="ALT_INIT"/>
    <property type="molecule type" value="Genomic_DNA"/>
</dbReference>
<dbReference type="PIR" id="H70647">
    <property type="entry name" value="H70647"/>
</dbReference>
<dbReference type="RefSeq" id="WP_003899937.1">
    <property type="nucleotide sequence ID" value="NZ_KK341227.1"/>
</dbReference>
<dbReference type="SMR" id="P9WIV8"/>
<dbReference type="KEGG" id="mtc:MT3239"/>
<dbReference type="PATRIC" id="fig|83331.31.peg.3487"/>
<dbReference type="HOGENOM" id="CLU_000422_4_0_11"/>
<dbReference type="Proteomes" id="UP000001020">
    <property type="component" value="Chromosome"/>
</dbReference>
<dbReference type="GO" id="GO:0016020">
    <property type="term" value="C:membrane"/>
    <property type="evidence" value="ECO:0007669"/>
    <property type="project" value="InterPro"/>
</dbReference>
<dbReference type="GO" id="GO:0051537">
    <property type="term" value="F:2 iron, 2 sulfur cluster binding"/>
    <property type="evidence" value="ECO:0007669"/>
    <property type="project" value="UniProtKB-KW"/>
</dbReference>
<dbReference type="GO" id="GO:0051539">
    <property type="term" value="F:4 iron, 4 sulfur cluster binding"/>
    <property type="evidence" value="ECO:0007669"/>
    <property type="project" value="UniProtKB-KW"/>
</dbReference>
<dbReference type="GO" id="GO:0046872">
    <property type="term" value="F:metal ion binding"/>
    <property type="evidence" value="ECO:0007669"/>
    <property type="project" value="UniProtKB-KW"/>
</dbReference>
<dbReference type="GO" id="GO:0043546">
    <property type="term" value="F:molybdopterin cofactor binding"/>
    <property type="evidence" value="ECO:0007669"/>
    <property type="project" value="InterPro"/>
</dbReference>
<dbReference type="GO" id="GO:0008137">
    <property type="term" value="F:NADH dehydrogenase (ubiquinone) activity"/>
    <property type="evidence" value="ECO:0007669"/>
    <property type="project" value="InterPro"/>
</dbReference>
<dbReference type="GO" id="GO:0048038">
    <property type="term" value="F:quinone binding"/>
    <property type="evidence" value="ECO:0007669"/>
    <property type="project" value="UniProtKB-KW"/>
</dbReference>
<dbReference type="GO" id="GO:0042773">
    <property type="term" value="P:ATP synthesis coupled electron transport"/>
    <property type="evidence" value="ECO:0007669"/>
    <property type="project" value="InterPro"/>
</dbReference>
<dbReference type="CDD" id="cd00207">
    <property type="entry name" value="fer2"/>
    <property type="match status" value="1"/>
</dbReference>
<dbReference type="CDD" id="cd02788">
    <property type="entry name" value="MopB_CT_NDH-1_NuoG2-N7"/>
    <property type="match status" value="1"/>
</dbReference>
<dbReference type="CDD" id="cd02771">
    <property type="entry name" value="MopB_NDH-1_NuoG2-N7"/>
    <property type="match status" value="1"/>
</dbReference>
<dbReference type="FunFam" id="2.20.25.90:FF:000002">
    <property type="entry name" value="NADH-quinone oxidoreductase"/>
    <property type="match status" value="1"/>
</dbReference>
<dbReference type="FunFam" id="3.30.70.20:FF:000016">
    <property type="entry name" value="NADH-quinone oxidoreductase"/>
    <property type="match status" value="1"/>
</dbReference>
<dbReference type="FunFam" id="3.10.20.740:FF:000001">
    <property type="entry name" value="NADH-quinone oxidoreductase subunit G"/>
    <property type="match status" value="1"/>
</dbReference>
<dbReference type="Gene3D" id="2.40.40.20">
    <property type="match status" value="1"/>
</dbReference>
<dbReference type="Gene3D" id="3.10.20.740">
    <property type="match status" value="1"/>
</dbReference>
<dbReference type="Gene3D" id="3.30.70.20">
    <property type="match status" value="1"/>
</dbReference>
<dbReference type="Gene3D" id="3.40.50.740">
    <property type="match status" value="2"/>
</dbReference>
<dbReference type="Gene3D" id="2.20.25.90">
    <property type="entry name" value="ADC-like domains"/>
    <property type="match status" value="1"/>
</dbReference>
<dbReference type="Gene3D" id="3.40.228.10">
    <property type="entry name" value="Dimethylsulfoxide Reductase, domain 2"/>
    <property type="match status" value="1"/>
</dbReference>
<dbReference type="InterPro" id="IPR036010">
    <property type="entry name" value="2Fe-2S_ferredoxin-like_sf"/>
</dbReference>
<dbReference type="InterPro" id="IPR001041">
    <property type="entry name" value="2Fe-2S_ferredoxin-type"/>
</dbReference>
<dbReference type="InterPro" id="IPR009010">
    <property type="entry name" value="Asp_de-COase-like_dom_sf"/>
</dbReference>
<dbReference type="InterPro" id="IPR006657">
    <property type="entry name" value="MoPterin_dinucl-bd_dom"/>
</dbReference>
<dbReference type="InterPro" id="IPR006656">
    <property type="entry name" value="Mopterin_OxRdtase"/>
</dbReference>
<dbReference type="InterPro" id="IPR006963">
    <property type="entry name" value="Mopterin_OxRdtase_4Fe-4S_dom"/>
</dbReference>
<dbReference type="InterPro" id="IPR000283">
    <property type="entry name" value="NADH_UbQ_OxRdtase_75kDa_su_CS"/>
</dbReference>
<dbReference type="InterPro" id="IPR054351">
    <property type="entry name" value="NADH_UbQ_OxRdtase_ferredoxin"/>
</dbReference>
<dbReference type="InterPro" id="IPR010228">
    <property type="entry name" value="NADH_UbQ_OxRdtase_Gsu"/>
</dbReference>
<dbReference type="InterPro" id="IPR019574">
    <property type="entry name" value="NADH_UbQ_OxRdtase_Gsu_4Fe4S-bd"/>
</dbReference>
<dbReference type="InterPro" id="IPR050123">
    <property type="entry name" value="Prok_molybdopt-oxidoreductase"/>
</dbReference>
<dbReference type="NCBIfam" id="TIGR01973">
    <property type="entry name" value="NuoG"/>
    <property type="match status" value="1"/>
</dbReference>
<dbReference type="NCBIfam" id="NF005895">
    <property type="entry name" value="PRK07860.1"/>
    <property type="match status" value="1"/>
</dbReference>
<dbReference type="PANTHER" id="PTHR43105:SF12">
    <property type="entry name" value="NADH-QUINONE OXIDOREDUCTASE SUBUNIT G"/>
    <property type="match status" value="1"/>
</dbReference>
<dbReference type="PANTHER" id="PTHR43105">
    <property type="entry name" value="RESPIRATORY NITRATE REDUCTASE"/>
    <property type="match status" value="1"/>
</dbReference>
<dbReference type="Pfam" id="PF13510">
    <property type="entry name" value="Fer2_4"/>
    <property type="match status" value="1"/>
</dbReference>
<dbReference type="Pfam" id="PF22117">
    <property type="entry name" value="Fer4_Nqo3"/>
    <property type="match status" value="1"/>
</dbReference>
<dbReference type="Pfam" id="PF00384">
    <property type="entry name" value="Molybdopterin"/>
    <property type="match status" value="1"/>
</dbReference>
<dbReference type="Pfam" id="PF01568">
    <property type="entry name" value="Molydop_binding"/>
    <property type="match status" value="1"/>
</dbReference>
<dbReference type="Pfam" id="PF10588">
    <property type="entry name" value="NADH-G_4Fe-4S_3"/>
    <property type="match status" value="1"/>
</dbReference>
<dbReference type="SMART" id="SM00926">
    <property type="entry name" value="Molybdop_Fe4S4"/>
    <property type="match status" value="1"/>
</dbReference>
<dbReference type="SMART" id="SM00929">
    <property type="entry name" value="NADH-G_4Fe-4S_3"/>
    <property type="match status" value="1"/>
</dbReference>
<dbReference type="SUPFAM" id="SSF54292">
    <property type="entry name" value="2Fe-2S ferredoxin-like"/>
    <property type="match status" value="1"/>
</dbReference>
<dbReference type="SUPFAM" id="SSF54862">
    <property type="entry name" value="4Fe-4S ferredoxins"/>
    <property type="match status" value="1"/>
</dbReference>
<dbReference type="SUPFAM" id="SSF50692">
    <property type="entry name" value="ADC-like"/>
    <property type="match status" value="1"/>
</dbReference>
<dbReference type="SUPFAM" id="SSF53706">
    <property type="entry name" value="Formate dehydrogenase/DMSO reductase, domains 1-3"/>
    <property type="match status" value="1"/>
</dbReference>
<dbReference type="PROSITE" id="PS51085">
    <property type="entry name" value="2FE2S_FER_2"/>
    <property type="match status" value="1"/>
</dbReference>
<dbReference type="PROSITE" id="PS51839">
    <property type="entry name" value="4FE4S_HC3"/>
    <property type="match status" value="1"/>
</dbReference>
<dbReference type="PROSITE" id="PS51669">
    <property type="entry name" value="4FE4S_MOW_BIS_MGD"/>
    <property type="match status" value="1"/>
</dbReference>
<dbReference type="PROSITE" id="PS00641">
    <property type="entry name" value="COMPLEX1_75K_1"/>
    <property type="match status" value="1"/>
</dbReference>
<dbReference type="PROSITE" id="PS00642">
    <property type="entry name" value="COMPLEX1_75K_2"/>
    <property type="match status" value="1"/>
</dbReference>
<dbReference type="PROSITE" id="PS00643">
    <property type="entry name" value="COMPLEX1_75K_3"/>
    <property type="match status" value="1"/>
</dbReference>
<feature type="chain" id="PRO_0000427937" description="NADH-quinone oxidoreductase subunit G">
    <location>
        <begin position="1"/>
        <end position="806"/>
    </location>
</feature>
<feature type="domain" description="2Fe-2S ferredoxin-type" evidence="3">
    <location>
        <begin position="15"/>
        <end position="93"/>
    </location>
</feature>
<feature type="domain" description="4Fe-4S His(Cys)3-ligated-type" evidence="5">
    <location>
        <begin position="95"/>
        <end position="134"/>
    </location>
</feature>
<feature type="domain" description="4Fe-4S Mo/W bis-MGD-type" evidence="4">
    <location>
        <begin position="233"/>
        <end position="289"/>
    </location>
</feature>
<feature type="binding site" evidence="1">
    <location>
        <position position="49"/>
    </location>
    <ligand>
        <name>[2Fe-2S] cluster</name>
        <dbReference type="ChEBI" id="CHEBI:190135"/>
    </ligand>
</feature>
<feature type="binding site" evidence="1">
    <location>
        <position position="60"/>
    </location>
    <ligand>
        <name>[2Fe-2S] cluster</name>
        <dbReference type="ChEBI" id="CHEBI:190135"/>
    </ligand>
</feature>
<feature type="binding site" evidence="1">
    <location>
        <position position="63"/>
    </location>
    <ligand>
        <name>[2Fe-2S] cluster</name>
        <dbReference type="ChEBI" id="CHEBI:190135"/>
    </ligand>
</feature>
<feature type="binding site" evidence="1">
    <location>
        <position position="77"/>
    </location>
    <ligand>
        <name>[2Fe-2S] cluster</name>
        <dbReference type="ChEBI" id="CHEBI:190135"/>
    </ligand>
</feature>
<feature type="binding site" evidence="5">
    <location>
        <position position="111"/>
    </location>
    <ligand>
        <name>[4Fe-4S] cluster</name>
        <dbReference type="ChEBI" id="CHEBI:49883"/>
        <label>1</label>
    </ligand>
</feature>
<feature type="binding site" evidence="5">
    <location>
        <position position="115"/>
    </location>
    <ligand>
        <name>[4Fe-4S] cluster</name>
        <dbReference type="ChEBI" id="CHEBI:49883"/>
        <label>1</label>
    </ligand>
</feature>
<feature type="binding site" evidence="5">
    <location>
        <position position="118"/>
    </location>
    <ligand>
        <name>[4Fe-4S] cluster</name>
        <dbReference type="ChEBI" id="CHEBI:49883"/>
        <label>1</label>
    </ligand>
</feature>
<feature type="binding site" evidence="5">
    <location>
        <position position="124"/>
    </location>
    <ligand>
        <name>[4Fe-4S] cluster</name>
        <dbReference type="ChEBI" id="CHEBI:49883"/>
        <label>1</label>
    </ligand>
</feature>
<feature type="binding site" evidence="1">
    <location>
        <position position="164"/>
    </location>
    <ligand>
        <name>[4Fe-4S] cluster</name>
        <dbReference type="ChEBI" id="CHEBI:49883"/>
        <label>2</label>
    </ligand>
</feature>
<feature type="binding site" evidence="1">
    <location>
        <position position="167"/>
    </location>
    <ligand>
        <name>[4Fe-4S] cluster</name>
        <dbReference type="ChEBI" id="CHEBI:49883"/>
        <label>2</label>
    </ligand>
</feature>
<feature type="binding site" evidence="1">
    <location>
        <position position="170"/>
    </location>
    <ligand>
        <name>[4Fe-4S] cluster</name>
        <dbReference type="ChEBI" id="CHEBI:49883"/>
        <label>2</label>
    </ligand>
</feature>
<feature type="binding site" evidence="1">
    <location>
        <position position="214"/>
    </location>
    <ligand>
        <name>[4Fe-4S] cluster</name>
        <dbReference type="ChEBI" id="CHEBI:49883"/>
        <label>2</label>
    </ligand>
</feature>
<feature type="binding site" evidence="2">
    <location>
        <position position="240"/>
    </location>
    <ligand>
        <name>[4Fe-4S] cluster</name>
        <dbReference type="ChEBI" id="CHEBI:49883"/>
        <label>3</label>
    </ligand>
</feature>
<feature type="binding site" evidence="2">
    <location>
        <position position="243"/>
    </location>
    <ligand>
        <name>[4Fe-4S] cluster</name>
        <dbReference type="ChEBI" id="CHEBI:49883"/>
        <label>3</label>
    </ligand>
</feature>
<feature type="binding site" evidence="2">
    <location>
        <position position="247"/>
    </location>
    <ligand>
        <name>[4Fe-4S] cluster</name>
        <dbReference type="ChEBI" id="CHEBI:49883"/>
        <label>3</label>
    </ligand>
</feature>
<feature type="binding site" evidence="2">
    <location>
        <position position="275"/>
    </location>
    <ligand>
        <name>[4Fe-4S] cluster</name>
        <dbReference type="ChEBI" id="CHEBI:49883"/>
        <label>3</label>
    </ligand>
</feature>
<proteinExistence type="inferred from homology"/>
<evidence type="ECO:0000250" key="1"/>
<evidence type="ECO:0000255" key="2"/>
<evidence type="ECO:0000255" key="3">
    <source>
        <dbReference type="PROSITE-ProRule" id="PRU00465"/>
    </source>
</evidence>
<evidence type="ECO:0000255" key="4">
    <source>
        <dbReference type="PROSITE-ProRule" id="PRU01004"/>
    </source>
</evidence>
<evidence type="ECO:0000255" key="5">
    <source>
        <dbReference type="PROSITE-ProRule" id="PRU01184"/>
    </source>
</evidence>
<evidence type="ECO:0000305" key="6"/>
<keyword id="KW-0001">2Fe-2S</keyword>
<keyword id="KW-0004">4Fe-4S</keyword>
<keyword id="KW-0408">Iron</keyword>
<keyword id="KW-0411">Iron-sulfur</keyword>
<keyword id="KW-0479">Metal-binding</keyword>
<keyword id="KW-0520">NAD</keyword>
<keyword id="KW-0874">Quinone</keyword>
<keyword id="KW-1185">Reference proteome</keyword>
<keyword id="KW-1278">Translocase</keyword>
<name>NUOG_MYCTO</name>
<protein>
    <recommendedName>
        <fullName>NADH-quinone oxidoreductase subunit G</fullName>
        <ecNumber>7.1.1.-</ecNumber>
    </recommendedName>
    <alternativeName>
        <fullName>NADH dehydrogenase I subunit G</fullName>
    </alternativeName>
    <alternativeName>
        <fullName>NDH-1 subunit G</fullName>
    </alternativeName>
</protein>
<organism>
    <name type="scientific">Mycobacterium tuberculosis (strain CDC 1551 / Oshkosh)</name>
    <dbReference type="NCBI Taxonomy" id="83331"/>
    <lineage>
        <taxon>Bacteria</taxon>
        <taxon>Bacillati</taxon>
        <taxon>Actinomycetota</taxon>
        <taxon>Actinomycetes</taxon>
        <taxon>Mycobacteriales</taxon>
        <taxon>Mycobacteriaceae</taxon>
        <taxon>Mycobacterium</taxon>
        <taxon>Mycobacterium tuberculosis complex</taxon>
    </lineage>
</organism>
<comment type="function">
    <text evidence="1">NDH-1 shuttles electrons from NADH, via FMN and iron-sulfur (Fe-S) centers, to quinones in the respiratory chain. The immediate electron acceptor for the enzyme in this species is believed to be menaquinone. Couples the redox reaction to proton translocation (for every two electrons transferred, four hydrogen ions are translocated across the cytoplasmic membrane), and thus conserves the redox energy in a proton gradient (By similarity).</text>
</comment>
<comment type="catalytic activity">
    <reaction>
        <text>a quinone + NADH + 5 H(+)(in) = a quinol + NAD(+) + 4 H(+)(out)</text>
        <dbReference type="Rhea" id="RHEA:57888"/>
        <dbReference type="ChEBI" id="CHEBI:15378"/>
        <dbReference type="ChEBI" id="CHEBI:24646"/>
        <dbReference type="ChEBI" id="CHEBI:57540"/>
        <dbReference type="ChEBI" id="CHEBI:57945"/>
        <dbReference type="ChEBI" id="CHEBI:132124"/>
    </reaction>
</comment>
<comment type="cofactor">
    <cofactor evidence="1">
        <name>[2Fe-2S] cluster</name>
        <dbReference type="ChEBI" id="CHEBI:190135"/>
    </cofactor>
    <text evidence="1">Binds 1 [2Fe-2S] cluster per subunit.</text>
</comment>
<comment type="cofactor">
    <cofactor evidence="1">
        <name>[4Fe-4S] cluster</name>
        <dbReference type="ChEBI" id="CHEBI:49883"/>
    </cofactor>
    <text evidence="1">Binds 3 [4Fe-4S] clusters per subunit.</text>
</comment>
<comment type="similarity">
    <text evidence="6">Belongs to the complex I 75 kDa subunit family.</text>
</comment>
<comment type="sequence caution" evidence="6">
    <conflict type="erroneous initiation">
        <sequence resource="EMBL-CDS" id="AAK47578"/>
    </conflict>
</comment>
<gene>
    <name type="primary">nuoG</name>
    <name type="ordered locus">MT3239</name>
</gene>
<reference key="1">
    <citation type="journal article" date="2002" name="J. Bacteriol.">
        <title>Whole-genome comparison of Mycobacterium tuberculosis clinical and laboratory strains.</title>
        <authorList>
            <person name="Fleischmann R.D."/>
            <person name="Alland D."/>
            <person name="Eisen J.A."/>
            <person name="Carpenter L."/>
            <person name="White O."/>
            <person name="Peterson J.D."/>
            <person name="DeBoy R.T."/>
            <person name="Dodson R.J."/>
            <person name="Gwinn M.L."/>
            <person name="Haft D.H."/>
            <person name="Hickey E.K."/>
            <person name="Kolonay J.F."/>
            <person name="Nelson W.C."/>
            <person name="Umayam L.A."/>
            <person name="Ermolaeva M.D."/>
            <person name="Salzberg S.L."/>
            <person name="Delcher A."/>
            <person name="Utterback T.R."/>
            <person name="Weidman J.F."/>
            <person name="Khouri H.M."/>
            <person name="Gill J."/>
            <person name="Mikula A."/>
            <person name="Bishai W."/>
            <person name="Jacobs W.R. Jr."/>
            <person name="Venter J.C."/>
            <person name="Fraser C.M."/>
        </authorList>
    </citation>
    <scope>NUCLEOTIDE SEQUENCE [LARGE SCALE GENOMIC DNA]</scope>
    <source>
        <strain>CDC 1551 / Oshkosh</strain>
    </source>
</reference>
<sequence>MTQAADTDIRVGQPEMVTLTIDGVEISVPKGTLVIRAAELMGIQIPRFCDHPLLEPVGACRQCLVEVEGQRKPLASCTTVATDDMVVRTQLTSEIADKAQHGVMELLLINHPLDCPMCDKGGECPLQNQAMSNGRTDSRFTEAKRTFAKPINISAQVLLDRERCILCARCTRFSDQIAGDPFIDMQERGALQQVGIYADEPFESYFSGNTVQICPVGALTGTAYRFRARPFDLVSSPSVCEHCASGCAQRTDHRRGKVLRRLAGDDPEVNEEWNCDKGRWAFTYATQPDVITTPLIRDGGDPKGALVPTSWSHAMAVAAQGLAAARGRTGVLVGGRVTWEDAYAYAKFARITLGTNDIDFRARPHSAEEADFLAARIAGRHMAVSYADLESAPVVLLVGFEPEDESPIVFLRLRKAARRHRVPVYTIAPFATGGLHKMSGRLIKTVPGGEPAALDDLATGAVGDLLATPGAVIMVGERLATVPGGLSAAARLADTTGARLAWVPRRAGERGALEAGALPTLLPGGRPLADEVARAQVCAAWHIAELPAAAGRDADGILAAAADETLAALLVGGIEPADFADPDAVLAALDATGFVVSLELRHSAVTERADVVFPVAPTTQKAGAFVNWEGRYRTFEPALRGSTLQAGQSDHRVLDALADDMGVHLGVPTVEAAREELAALGIWDGKHAAGPHIAATGPTQPEAGEAILTGWRMLLDEGRLQDGEPYLAGTARTPVVRLSPDTAAEIGAADGEAVTVSTSRGSITLPCSVTDMPDRVVWLPLNSAGSTVHRQLRVTIGSIVKIGAGS</sequence>
<accession>P9WIV8</accession>
<accession>L0TBP2</accession>
<accession>P95175</accession>